<sequence length="364" mass="40437">MSKPVNLVLLYGGKSGEHEVSLVSAASVLKHLDSEKYHIIPIAMDKSGRFHRHDYNDLLACSDKLPVVTEKSTPLEGLLINGRLAVDAEIVFPVVHGPLYEDGCLQGLLELAGVAYVGCDVLSSAIGMDKDMARRLACINGLKSARYKLLSWHANASERQQFCHEVASEFGWPLFVKPCSLGSSVGIHKANNMDELNAAVADALRYDEEILVEEFIVGREIELAVLENSIPCGKPRVSMVGEIKVNHPDGYYSYTAKYLESSQTDLIIPAQLNNSLEEQLKQAAANIFSYLKCKGMARVDFFVNDKTEEIYFNEINTLPGFTSISMYPKLWQATGIAYPDLLDELINLAMIHHNCRQHLVTNYL</sequence>
<feature type="chain" id="PRO_1000030460" description="D-alanine--D-alanine ligase">
    <location>
        <begin position="1"/>
        <end position="364"/>
    </location>
</feature>
<feature type="domain" description="ATP-grasp" evidence="2">
    <location>
        <begin position="134"/>
        <end position="347"/>
    </location>
</feature>
<feature type="binding site" evidence="2">
    <location>
        <begin position="167"/>
        <end position="222"/>
    </location>
    <ligand>
        <name>ATP</name>
        <dbReference type="ChEBI" id="CHEBI:30616"/>
    </ligand>
</feature>
<feature type="binding site" evidence="2">
    <location>
        <position position="300"/>
    </location>
    <ligand>
        <name>Mg(2+)</name>
        <dbReference type="ChEBI" id="CHEBI:18420"/>
        <label>1</label>
    </ligand>
</feature>
<feature type="binding site" evidence="2">
    <location>
        <position position="314"/>
    </location>
    <ligand>
        <name>Mg(2+)</name>
        <dbReference type="ChEBI" id="CHEBI:18420"/>
        <label>1</label>
    </ligand>
</feature>
<feature type="binding site" evidence="2">
    <location>
        <position position="314"/>
    </location>
    <ligand>
        <name>Mg(2+)</name>
        <dbReference type="ChEBI" id="CHEBI:18420"/>
        <label>2</label>
    </ligand>
</feature>
<feature type="binding site" evidence="2">
    <location>
        <position position="316"/>
    </location>
    <ligand>
        <name>Mg(2+)</name>
        <dbReference type="ChEBI" id="CHEBI:18420"/>
        <label>2</label>
    </ligand>
</feature>
<keyword id="KW-0067">ATP-binding</keyword>
<keyword id="KW-0133">Cell shape</keyword>
<keyword id="KW-0961">Cell wall biogenesis/degradation</keyword>
<keyword id="KW-0963">Cytoplasm</keyword>
<keyword id="KW-0436">Ligase</keyword>
<keyword id="KW-0460">Magnesium</keyword>
<keyword id="KW-0464">Manganese</keyword>
<keyword id="KW-0479">Metal-binding</keyword>
<keyword id="KW-0547">Nucleotide-binding</keyword>
<keyword id="KW-0573">Peptidoglycan synthesis</keyword>
<organism>
    <name type="scientific">Legionella pneumophila (strain Lens)</name>
    <dbReference type="NCBI Taxonomy" id="297245"/>
    <lineage>
        <taxon>Bacteria</taxon>
        <taxon>Pseudomonadati</taxon>
        <taxon>Pseudomonadota</taxon>
        <taxon>Gammaproteobacteria</taxon>
        <taxon>Legionellales</taxon>
        <taxon>Legionellaceae</taxon>
        <taxon>Legionella</taxon>
    </lineage>
</organism>
<name>DDL_LEGPL</name>
<protein>
    <recommendedName>
        <fullName evidence="2">D-alanine--D-alanine ligase</fullName>
        <ecNumber evidence="2">6.3.2.4</ecNumber>
    </recommendedName>
    <alternativeName>
        <fullName evidence="2">D-Ala-D-Ala ligase</fullName>
    </alternativeName>
    <alternativeName>
        <fullName evidence="2">D-alanylalanine synthetase</fullName>
    </alternativeName>
</protein>
<reference key="1">
    <citation type="journal article" date="2004" name="Nat. Genet.">
        <title>Evidence in the Legionella pneumophila genome for exploitation of host cell functions and high genome plasticity.</title>
        <authorList>
            <person name="Cazalet C."/>
            <person name="Rusniok C."/>
            <person name="Brueggemann H."/>
            <person name="Zidane N."/>
            <person name="Magnier A."/>
            <person name="Ma L."/>
            <person name="Tichit M."/>
            <person name="Jarraud S."/>
            <person name="Bouchier C."/>
            <person name="Vandenesch F."/>
            <person name="Kunst F."/>
            <person name="Etienne J."/>
            <person name="Glaser P."/>
            <person name="Buchrieser C."/>
        </authorList>
    </citation>
    <scope>NUCLEOTIDE SEQUENCE [LARGE SCALE GENOMIC DNA]</scope>
    <source>
        <strain>Lens</strain>
    </source>
</reference>
<accession>Q5WTI9</accession>
<comment type="function">
    <text evidence="2">Cell wall formation.</text>
</comment>
<comment type="catalytic activity">
    <reaction evidence="2">
        <text>2 D-alanine + ATP = D-alanyl-D-alanine + ADP + phosphate + H(+)</text>
        <dbReference type="Rhea" id="RHEA:11224"/>
        <dbReference type="ChEBI" id="CHEBI:15378"/>
        <dbReference type="ChEBI" id="CHEBI:30616"/>
        <dbReference type="ChEBI" id="CHEBI:43474"/>
        <dbReference type="ChEBI" id="CHEBI:57416"/>
        <dbReference type="ChEBI" id="CHEBI:57822"/>
        <dbReference type="ChEBI" id="CHEBI:456216"/>
        <dbReference type="EC" id="6.3.2.4"/>
    </reaction>
</comment>
<comment type="cofactor">
    <cofactor evidence="1">
        <name>Mg(2+)</name>
        <dbReference type="ChEBI" id="CHEBI:18420"/>
    </cofactor>
    <cofactor evidence="1">
        <name>Mn(2+)</name>
        <dbReference type="ChEBI" id="CHEBI:29035"/>
    </cofactor>
    <text evidence="1">Binds 2 magnesium or manganese ions per subunit.</text>
</comment>
<comment type="pathway">
    <text evidence="2">Cell wall biogenesis; peptidoglycan biosynthesis.</text>
</comment>
<comment type="subcellular location">
    <subcellularLocation>
        <location evidence="2">Cytoplasm</location>
    </subcellularLocation>
</comment>
<comment type="similarity">
    <text evidence="2">Belongs to the D-alanine--D-alanine ligase family.</text>
</comment>
<proteinExistence type="inferred from homology"/>
<dbReference type="EC" id="6.3.2.4" evidence="2"/>
<dbReference type="EMBL" id="CR628337">
    <property type="protein sequence ID" value="CAH16775.1"/>
    <property type="molecule type" value="Genomic_DNA"/>
</dbReference>
<dbReference type="RefSeq" id="WP_011216487.1">
    <property type="nucleotide sequence ID" value="NC_006369.1"/>
</dbReference>
<dbReference type="SMR" id="Q5WTI9"/>
<dbReference type="KEGG" id="lpf:lpl2535"/>
<dbReference type="LegioList" id="lpl2535"/>
<dbReference type="HOGENOM" id="CLU_039268_0_0_6"/>
<dbReference type="UniPathway" id="UPA00219"/>
<dbReference type="Proteomes" id="UP000002517">
    <property type="component" value="Chromosome"/>
</dbReference>
<dbReference type="GO" id="GO:0005829">
    <property type="term" value="C:cytosol"/>
    <property type="evidence" value="ECO:0007669"/>
    <property type="project" value="TreeGrafter"/>
</dbReference>
<dbReference type="GO" id="GO:0005524">
    <property type="term" value="F:ATP binding"/>
    <property type="evidence" value="ECO:0007669"/>
    <property type="project" value="UniProtKB-KW"/>
</dbReference>
<dbReference type="GO" id="GO:0008716">
    <property type="term" value="F:D-alanine-D-alanine ligase activity"/>
    <property type="evidence" value="ECO:0007669"/>
    <property type="project" value="UniProtKB-UniRule"/>
</dbReference>
<dbReference type="GO" id="GO:0046872">
    <property type="term" value="F:metal ion binding"/>
    <property type="evidence" value="ECO:0007669"/>
    <property type="project" value="UniProtKB-KW"/>
</dbReference>
<dbReference type="GO" id="GO:0071555">
    <property type="term" value="P:cell wall organization"/>
    <property type="evidence" value="ECO:0007669"/>
    <property type="project" value="UniProtKB-KW"/>
</dbReference>
<dbReference type="GO" id="GO:0009252">
    <property type="term" value="P:peptidoglycan biosynthetic process"/>
    <property type="evidence" value="ECO:0007669"/>
    <property type="project" value="UniProtKB-UniRule"/>
</dbReference>
<dbReference type="GO" id="GO:0008360">
    <property type="term" value="P:regulation of cell shape"/>
    <property type="evidence" value="ECO:0007669"/>
    <property type="project" value="UniProtKB-KW"/>
</dbReference>
<dbReference type="FunFam" id="3.30.1490.20:FF:000007">
    <property type="entry name" value="D-alanine--D-alanine ligase"/>
    <property type="match status" value="1"/>
</dbReference>
<dbReference type="FunFam" id="3.30.470.20:FF:000008">
    <property type="entry name" value="D-alanine--D-alanine ligase"/>
    <property type="match status" value="1"/>
</dbReference>
<dbReference type="Gene3D" id="3.40.50.20">
    <property type="match status" value="1"/>
</dbReference>
<dbReference type="Gene3D" id="3.30.1490.20">
    <property type="entry name" value="ATP-grasp fold, A domain"/>
    <property type="match status" value="1"/>
</dbReference>
<dbReference type="Gene3D" id="3.30.470.20">
    <property type="entry name" value="ATP-grasp fold, B domain"/>
    <property type="match status" value="1"/>
</dbReference>
<dbReference type="HAMAP" id="MF_00047">
    <property type="entry name" value="Dala_Dala_lig"/>
    <property type="match status" value="1"/>
</dbReference>
<dbReference type="InterPro" id="IPR011761">
    <property type="entry name" value="ATP-grasp"/>
</dbReference>
<dbReference type="InterPro" id="IPR013815">
    <property type="entry name" value="ATP_grasp_subdomain_1"/>
</dbReference>
<dbReference type="InterPro" id="IPR000291">
    <property type="entry name" value="D-Ala_lig_Van_CS"/>
</dbReference>
<dbReference type="InterPro" id="IPR005905">
    <property type="entry name" value="D_ala_D_ala"/>
</dbReference>
<dbReference type="InterPro" id="IPR011095">
    <property type="entry name" value="Dala_Dala_lig_C"/>
</dbReference>
<dbReference type="InterPro" id="IPR011127">
    <property type="entry name" value="Dala_Dala_lig_N"/>
</dbReference>
<dbReference type="InterPro" id="IPR016185">
    <property type="entry name" value="PreATP-grasp_dom_sf"/>
</dbReference>
<dbReference type="NCBIfam" id="TIGR01205">
    <property type="entry name" value="D_ala_D_alaTIGR"/>
    <property type="match status" value="1"/>
</dbReference>
<dbReference type="NCBIfam" id="NF002528">
    <property type="entry name" value="PRK01966.1-4"/>
    <property type="match status" value="1"/>
</dbReference>
<dbReference type="PANTHER" id="PTHR23132">
    <property type="entry name" value="D-ALANINE--D-ALANINE LIGASE"/>
    <property type="match status" value="1"/>
</dbReference>
<dbReference type="PANTHER" id="PTHR23132:SF25">
    <property type="entry name" value="D-ALANINE--D-ALANINE LIGASE A"/>
    <property type="match status" value="1"/>
</dbReference>
<dbReference type="Pfam" id="PF07478">
    <property type="entry name" value="Dala_Dala_lig_C"/>
    <property type="match status" value="1"/>
</dbReference>
<dbReference type="Pfam" id="PF01820">
    <property type="entry name" value="Dala_Dala_lig_N"/>
    <property type="match status" value="1"/>
</dbReference>
<dbReference type="PIRSF" id="PIRSF039102">
    <property type="entry name" value="Ddl/VanB"/>
    <property type="match status" value="1"/>
</dbReference>
<dbReference type="SUPFAM" id="SSF56059">
    <property type="entry name" value="Glutathione synthetase ATP-binding domain-like"/>
    <property type="match status" value="1"/>
</dbReference>
<dbReference type="SUPFAM" id="SSF52440">
    <property type="entry name" value="PreATP-grasp domain"/>
    <property type="match status" value="1"/>
</dbReference>
<dbReference type="PROSITE" id="PS50975">
    <property type="entry name" value="ATP_GRASP"/>
    <property type="match status" value="1"/>
</dbReference>
<dbReference type="PROSITE" id="PS00844">
    <property type="entry name" value="DALA_DALA_LIGASE_2"/>
    <property type="match status" value="1"/>
</dbReference>
<evidence type="ECO:0000250" key="1"/>
<evidence type="ECO:0000255" key="2">
    <source>
        <dbReference type="HAMAP-Rule" id="MF_00047"/>
    </source>
</evidence>
<gene>
    <name evidence="2" type="primary">ddl</name>
    <name type="ordered locus">lpl2535</name>
</gene>